<dbReference type="EMBL" id="X92868">
    <property type="protein sequence ID" value="CAA63457.1"/>
    <property type="molecule type" value="Genomic_DNA"/>
</dbReference>
<dbReference type="EMBL" id="U93875">
    <property type="protein sequence ID" value="AAB80884.1"/>
    <property type="molecule type" value="Genomic_DNA"/>
</dbReference>
<dbReference type="EMBL" id="AL009126">
    <property type="protein sequence ID" value="CAB14628.1"/>
    <property type="molecule type" value="Genomic_DNA"/>
</dbReference>
<dbReference type="PIR" id="F69971">
    <property type="entry name" value="F69971"/>
</dbReference>
<dbReference type="RefSeq" id="NP_390564.1">
    <property type="nucleotide sequence ID" value="NC_000964.3"/>
</dbReference>
<dbReference type="RefSeq" id="WP_004398819.1">
    <property type="nucleotide sequence ID" value="NZ_OZ025638.1"/>
</dbReference>
<dbReference type="SMR" id="O07906"/>
<dbReference type="FunCoup" id="O07906">
    <property type="interactions" value="22"/>
</dbReference>
<dbReference type="STRING" id="224308.BSU26870"/>
<dbReference type="PaxDb" id="224308-BSU26870"/>
<dbReference type="EnsemblBacteria" id="CAB14628">
    <property type="protein sequence ID" value="CAB14628"/>
    <property type="gene ID" value="BSU_26870"/>
</dbReference>
<dbReference type="GeneID" id="937614"/>
<dbReference type="KEGG" id="bsu:BSU26870"/>
<dbReference type="PATRIC" id="fig|224308.179.peg.2919"/>
<dbReference type="eggNOG" id="COG0583">
    <property type="taxonomic scope" value="Bacteria"/>
</dbReference>
<dbReference type="InParanoid" id="O07906"/>
<dbReference type="OrthoDB" id="107670at2"/>
<dbReference type="PhylomeDB" id="O07906"/>
<dbReference type="BioCyc" id="BSUB:BSU26870-MONOMER"/>
<dbReference type="Proteomes" id="UP000001570">
    <property type="component" value="Chromosome"/>
</dbReference>
<dbReference type="GO" id="GO:0003700">
    <property type="term" value="F:DNA-binding transcription factor activity"/>
    <property type="evidence" value="ECO:0007669"/>
    <property type="project" value="InterPro"/>
</dbReference>
<dbReference type="GO" id="GO:0000976">
    <property type="term" value="F:transcription cis-regulatory region binding"/>
    <property type="evidence" value="ECO:0000318"/>
    <property type="project" value="GO_Central"/>
</dbReference>
<dbReference type="GO" id="GO:0006355">
    <property type="term" value="P:regulation of DNA-templated transcription"/>
    <property type="evidence" value="ECO:0000318"/>
    <property type="project" value="GO_Central"/>
</dbReference>
<dbReference type="CDD" id="cd05466">
    <property type="entry name" value="PBP2_LTTR_substrate"/>
    <property type="match status" value="1"/>
</dbReference>
<dbReference type="Gene3D" id="3.40.190.290">
    <property type="match status" value="1"/>
</dbReference>
<dbReference type="Gene3D" id="1.10.10.10">
    <property type="entry name" value="Winged helix-like DNA-binding domain superfamily/Winged helix DNA-binding domain"/>
    <property type="match status" value="1"/>
</dbReference>
<dbReference type="InterPro" id="IPR005119">
    <property type="entry name" value="LysR_subst-bd"/>
</dbReference>
<dbReference type="InterPro" id="IPR000847">
    <property type="entry name" value="Tscrpt_reg_HTH_LysR"/>
</dbReference>
<dbReference type="InterPro" id="IPR036388">
    <property type="entry name" value="WH-like_DNA-bd_sf"/>
</dbReference>
<dbReference type="InterPro" id="IPR036390">
    <property type="entry name" value="WH_DNA-bd_sf"/>
</dbReference>
<dbReference type="PANTHER" id="PTHR30126:SF78">
    <property type="entry name" value="HTH LYSR-TYPE DOMAIN-CONTAINING PROTEIN"/>
    <property type="match status" value="1"/>
</dbReference>
<dbReference type="PANTHER" id="PTHR30126">
    <property type="entry name" value="HTH-TYPE TRANSCRIPTIONAL REGULATOR"/>
    <property type="match status" value="1"/>
</dbReference>
<dbReference type="Pfam" id="PF00126">
    <property type="entry name" value="HTH_1"/>
    <property type="match status" value="1"/>
</dbReference>
<dbReference type="Pfam" id="PF03466">
    <property type="entry name" value="LysR_substrate"/>
    <property type="match status" value="1"/>
</dbReference>
<dbReference type="PRINTS" id="PR00039">
    <property type="entry name" value="HTHLYSR"/>
</dbReference>
<dbReference type="SUPFAM" id="SSF53850">
    <property type="entry name" value="Periplasmic binding protein-like II"/>
    <property type="match status" value="1"/>
</dbReference>
<dbReference type="SUPFAM" id="SSF46785">
    <property type="entry name" value="Winged helix' DNA-binding domain"/>
    <property type="match status" value="1"/>
</dbReference>
<dbReference type="PROSITE" id="PS50931">
    <property type="entry name" value="HTH_LYSR"/>
    <property type="match status" value="1"/>
</dbReference>
<accession>O07906</accession>
<gene>
    <name type="primary">yraN</name>
    <name type="ordered locus">BSU26870</name>
</gene>
<reference key="1">
    <citation type="journal article" date="1997" name="Microbiology">
        <title>A 23911 bp region of the Bacillus subtilis genome comprising genes located upstream and downstream of the lev operon.</title>
        <authorList>
            <person name="Parro V."/>
            <person name="San Roman M."/>
            <person name="Galindo I."/>
            <person name="Purnelle B."/>
            <person name="Bolotin A."/>
            <person name="Sorokin A."/>
            <person name="Mellado R.P."/>
        </authorList>
    </citation>
    <scope>NUCLEOTIDE SEQUENCE [GENOMIC DNA]</scope>
    <source>
        <strain>168</strain>
    </source>
</reference>
<reference key="2">
    <citation type="journal article" date="1997" name="Microbiology">
        <title>Sequence of the Bacillus subtilis genome region in the vicinity of the lev operon reveals two new extracytoplasmic function RNA polymerase sigma factors SigV and SigZ.</title>
        <authorList>
            <person name="Sorokin A."/>
            <person name="Bolotin A."/>
            <person name="Purnelle B."/>
            <person name="Hilbert H."/>
            <person name="Lauber J."/>
            <person name="Duesterhoeft A."/>
            <person name="Ehrlich S.D."/>
        </authorList>
    </citation>
    <scope>NUCLEOTIDE SEQUENCE [GENOMIC DNA]</scope>
    <source>
        <strain>168</strain>
    </source>
</reference>
<reference key="3">
    <citation type="journal article" date="1997" name="Nature">
        <title>The complete genome sequence of the Gram-positive bacterium Bacillus subtilis.</title>
        <authorList>
            <person name="Kunst F."/>
            <person name="Ogasawara N."/>
            <person name="Moszer I."/>
            <person name="Albertini A.M."/>
            <person name="Alloni G."/>
            <person name="Azevedo V."/>
            <person name="Bertero M.G."/>
            <person name="Bessieres P."/>
            <person name="Bolotin A."/>
            <person name="Borchert S."/>
            <person name="Borriss R."/>
            <person name="Boursier L."/>
            <person name="Brans A."/>
            <person name="Braun M."/>
            <person name="Brignell S.C."/>
            <person name="Bron S."/>
            <person name="Brouillet S."/>
            <person name="Bruschi C.V."/>
            <person name="Caldwell B."/>
            <person name="Capuano V."/>
            <person name="Carter N.M."/>
            <person name="Choi S.-K."/>
            <person name="Codani J.-J."/>
            <person name="Connerton I.F."/>
            <person name="Cummings N.J."/>
            <person name="Daniel R.A."/>
            <person name="Denizot F."/>
            <person name="Devine K.M."/>
            <person name="Duesterhoeft A."/>
            <person name="Ehrlich S.D."/>
            <person name="Emmerson P.T."/>
            <person name="Entian K.-D."/>
            <person name="Errington J."/>
            <person name="Fabret C."/>
            <person name="Ferrari E."/>
            <person name="Foulger D."/>
            <person name="Fritz C."/>
            <person name="Fujita M."/>
            <person name="Fujita Y."/>
            <person name="Fuma S."/>
            <person name="Galizzi A."/>
            <person name="Galleron N."/>
            <person name="Ghim S.-Y."/>
            <person name="Glaser P."/>
            <person name="Goffeau A."/>
            <person name="Golightly E.J."/>
            <person name="Grandi G."/>
            <person name="Guiseppi G."/>
            <person name="Guy B.J."/>
            <person name="Haga K."/>
            <person name="Haiech J."/>
            <person name="Harwood C.R."/>
            <person name="Henaut A."/>
            <person name="Hilbert H."/>
            <person name="Holsappel S."/>
            <person name="Hosono S."/>
            <person name="Hullo M.-F."/>
            <person name="Itaya M."/>
            <person name="Jones L.-M."/>
            <person name="Joris B."/>
            <person name="Karamata D."/>
            <person name="Kasahara Y."/>
            <person name="Klaerr-Blanchard M."/>
            <person name="Klein C."/>
            <person name="Kobayashi Y."/>
            <person name="Koetter P."/>
            <person name="Koningstein G."/>
            <person name="Krogh S."/>
            <person name="Kumano M."/>
            <person name="Kurita K."/>
            <person name="Lapidus A."/>
            <person name="Lardinois S."/>
            <person name="Lauber J."/>
            <person name="Lazarevic V."/>
            <person name="Lee S.-M."/>
            <person name="Levine A."/>
            <person name="Liu H."/>
            <person name="Masuda S."/>
            <person name="Mauel C."/>
            <person name="Medigue C."/>
            <person name="Medina N."/>
            <person name="Mellado R.P."/>
            <person name="Mizuno M."/>
            <person name="Moestl D."/>
            <person name="Nakai S."/>
            <person name="Noback M."/>
            <person name="Noone D."/>
            <person name="O'Reilly M."/>
            <person name="Ogawa K."/>
            <person name="Ogiwara A."/>
            <person name="Oudega B."/>
            <person name="Park S.-H."/>
            <person name="Parro V."/>
            <person name="Pohl T.M."/>
            <person name="Portetelle D."/>
            <person name="Porwollik S."/>
            <person name="Prescott A.M."/>
            <person name="Presecan E."/>
            <person name="Pujic P."/>
            <person name="Purnelle B."/>
            <person name="Rapoport G."/>
            <person name="Rey M."/>
            <person name="Reynolds S."/>
            <person name="Rieger M."/>
            <person name="Rivolta C."/>
            <person name="Rocha E."/>
            <person name="Roche B."/>
            <person name="Rose M."/>
            <person name="Sadaie Y."/>
            <person name="Sato T."/>
            <person name="Scanlan E."/>
            <person name="Schleich S."/>
            <person name="Schroeter R."/>
            <person name="Scoffone F."/>
            <person name="Sekiguchi J."/>
            <person name="Sekowska A."/>
            <person name="Seror S.J."/>
            <person name="Serror P."/>
            <person name="Shin B.-S."/>
            <person name="Soldo B."/>
            <person name="Sorokin A."/>
            <person name="Tacconi E."/>
            <person name="Takagi T."/>
            <person name="Takahashi H."/>
            <person name="Takemaru K."/>
            <person name="Takeuchi M."/>
            <person name="Tamakoshi A."/>
            <person name="Tanaka T."/>
            <person name="Terpstra P."/>
            <person name="Tognoni A."/>
            <person name="Tosato V."/>
            <person name="Uchiyama S."/>
            <person name="Vandenbol M."/>
            <person name="Vannier F."/>
            <person name="Vassarotti A."/>
            <person name="Viari A."/>
            <person name="Wambutt R."/>
            <person name="Wedler E."/>
            <person name="Wedler H."/>
            <person name="Weitzenegger T."/>
            <person name="Winters P."/>
            <person name="Wipat A."/>
            <person name="Yamamoto H."/>
            <person name="Yamane K."/>
            <person name="Yasumoto K."/>
            <person name="Yata K."/>
            <person name="Yoshida K."/>
            <person name="Yoshikawa H.-F."/>
            <person name="Zumstein E."/>
            <person name="Yoshikawa H."/>
            <person name="Danchin A."/>
        </authorList>
    </citation>
    <scope>NUCLEOTIDE SEQUENCE [LARGE SCALE GENOMIC DNA]</scope>
    <source>
        <strain>168</strain>
    </source>
</reference>
<proteinExistence type="inferred from homology"/>
<name>YRAN_BACSU</name>
<feature type="chain" id="PRO_0000105819" description="Uncharacterized HTH-type transcriptional regulator YraN">
    <location>
        <begin position="1"/>
        <end position="289"/>
    </location>
</feature>
<feature type="domain" description="HTH lysR-type" evidence="1">
    <location>
        <begin position="1"/>
        <end position="58"/>
    </location>
</feature>
<feature type="DNA-binding region" description="H-T-H motif" evidence="1">
    <location>
        <begin position="18"/>
        <end position="37"/>
    </location>
</feature>
<organism>
    <name type="scientific">Bacillus subtilis (strain 168)</name>
    <dbReference type="NCBI Taxonomy" id="224308"/>
    <lineage>
        <taxon>Bacteria</taxon>
        <taxon>Bacillati</taxon>
        <taxon>Bacillota</taxon>
        <taxon>Bacilli</taxon>
        <taxon>Bacillales</taxon>
        <taxon>Bacillaceae</taxon>
        <taxon>Bacillus</taxon>
    </lineage>
</organism>
<keyword id="KW-0238">DNA-binding</keyword>
<keyword id="KW-1185">Reference proteome</keyword>
<keyword id="KW-0804">Transcription</keyword>
<keyword id="KW-0805">Transcription regulation</keyword>
<evidence type="ECO:0000255" key="1">
    <source>
        <dbReference type="PROSITE-ProRule" id="PRU00253"/>
    </source>
</evidence>
<evidence type="ECO:0000305" key="2"/>
<protein>
    <recommendedName>
        <fullName>Uncharacterized HTH-type transcriptional regulator YraN</fullName>
    </recommendedName>
</protein>
<sequence length="289" mass="33616">MDEKDWILLKILHEEQSVTKTAERLFTSQPSITYRLKKIEEIFGIELFTKRHKGITFTAEGEHLVAYARRMLQELQDTKDHISNLSKEVQGHLRLGVSSNFAQYKLPKLLREFSTMYPNVQYSVQTGWSTDVMKLLDAGIVQVGILRGSHRWKGVEERLTREKLHIISKKPITIEQLPFLPFIKYKTDASLKTIIEDWMHTNLKQAPIIAMEVDRQETCKEMVKHGLGYSIAPEICLQESDHLYTMELYNAKGKPLMRDTWLMYDQKSLGIKLVKAFIDFLKGEQMVTI</sequence>
<comment type="similarity">
    <text evidence="2">Belongs to the LysR transcriptional regulatory family.</text>
</comment>